<evidence type="ECO:0000250" key="1"/>
<evidence type="ECO:0000255" key="2">
    <source>
        <dbReference type="PROSITE-ProRule" id="PRU00809"/>
    </source>
</evidence>
<evidence type="ECO:0000312" key="3">
    <source>
        <dbReference type="EMBL" id="EAZ45289.1"/>
    </source>
</evidence>
<reference key="1">
    <citation type="journal article" date="2000" name="Gene">
        <title>Primary structural features of the 20S proteasome subunits of rice (Oryza sativa).</title>
        <authorList>
            <person name="Sassa H."/>
            <person name="Oguchi S."/>
            <person name="Inoue T."/>
            <person name="Hirano H."/>
        </authorList>
    </citation>
    <scope>NUCLEOTIDE SEQUENCE [MRNA]</scope>
    <source>
        <strain>cv. Nipponbare</strain>
        <tissue>Root</tissue>
    </source>
</reference>
<reference key="2">
    <citation type="journal article" date="2005" name="Nature">
        <title>The map-based sequence of the rice genome.</title>
        <authorList>
            <consortium name="International rice genome sequencing project (IRGSP)"/>
        </authorList>
    </citation>
    <scope>NUCLEOTIDE SEQUENCE [LARGE SCALE GENOMIC DNA]</scope>
    <source>
        <strain>cv. Nipponbare</strain>
    </source>
</reference>
<reference key="3">
    <citation type="journal article" date="2008" name="Nucleic Acids Res.">
        <title>The rice annotation project database (RAP-DB): 2008 update.</title>
        <authorList>
            <consortium name="The rice annotation project (RAP)"/>
        </authorList>
    </citation>
    <scope>GENOME REANNOTATION</scope>
    <source>
        <strain>cv. Nipponbare</strain>
    </source>
</reference>
<reference key="4">
    <citation type="journal article" date="2013" name="Rice">
        <title>Improvement of the Oryza sativa Nipponbare reference genome using next generation sequence and optical map data.</title>
        <authorList>
            <person name="Kawahara Y."/>
            <person name="de la Bastide M."/>
            <person name="Hamilton J.P."/>
            <person name="Kanamori H."/>
            <person name="McCombie W.R."/>
            <person name="Ouyang S."/>
            <person name="Schwartz D.C."/>
            <person name="Tanaka T."/>
            <person name="Wu J."/>
            <person name="Zhou S."/>
            <person name="Childs K.L."/>
            <person name="Davidson R.M."/>
            <person name="Lin H."/>
            <person name="Quesada-Ocampo L."/>
            <person name="Vaillancourt B."/>
            <person name="Sakai H."/>
            <person name="Lee S.S."/>
            <person name="Kim J."/>
            <person name="Numa H."/>
            <person name="Itoh T."/>
            <person name="Buell C.R."/>
            <person name="Matsumoto T."/>
        </authorList>
    </citation>
    <scope>GENOME REANNOTATION</scope>
    <source>
        <strain>cv. Nipponbare</strain>
    </source>
</reference>
<reference key="5">
    <citation type="journal article" date="2005" name="PLoS Biol.">
        <title>The genomes of Oryza sativa: a history of duplications.</title>
        <authorList>
            <person name="Yu J."/>
            <person name="Wang J."/>
            <person name="Lin W."/>
            <person name="Li S."/>
            <person name="Li H."/>
            <person name="Zhou J."/>
            <person name="Ni P."/>
            <person name="Dong W."/>
            <person name="Hu S."/>
            <person name="Zeng C."/>
            <person name="Zhang J."/>
            <person name="Zhang Y."/>
            <person name="Li R."/>
            <person name="Xu Z."/>
            <person name="Li S."/>
            <person name="Li X."/>
            <person name="Zheng H."/>
            <person name="Cong L."/>
            <person name="Lin L."/>
            <person name="Yin J."/>
            <person name="Geng J."/>
            <person name="Li G."/>
            <person name="Shi J."/>
            <person name="Liu J."/>
            <person name="Lv H."/>
            <person name="Li J."/>
            <person name="Wang J."/>
            <person name="Deng Y."/>
            <person name="Ran L."/>
            <person name="Shi X."/>
            <person name="Wang X."/>
            <person name="Wu Q."/>
            <person name="Li C."/>
            <person name="Ren X."/>
            <person name="Wang J."/>
            <person name="Wang X."/>
            <person name="Li D."/>
            <person name="Liu D."/>
            <person name="Zhang X."/>
            <person name="Ji Z."/>
            <person name="Zhao W."/>
            <person name="Sun Y."/>
            <person name="Zhang Z."/>
            <person name="Bao J."/>
            <person name="Han Y."/>
            <person name="Dong L."/>
            <person name="Ji J."/>
            <person name="Chen P."/>
            <person name="Wu S."/>
            <person name="Liu J."/>
            <person name="Xiao Y."/>
            <person name="Bu D."/>
            <person name="Tan J."/>
            <person name="Yang L."/>
            <person name="Ye C."/>
            <person name="Zhang J."/>
            <person name="Xu J."/>
            <person name="Zhou Y."/>
            <person name="Yu Y."/>
            <person name="Zhang B."/>
            <person name="Zhuang S."/>
            <person name="Wei H."/>
            <person name="Liu B."/>
            <person name="Lei M."/>
            <person name="Yu H."/>
            <person name="Li Y."/>
            <person name="Xu H."/>
            <person name="Wei S."/>
            <person name="He X."/>
            <person name="Fang L."/>
            <person name="Zhang Z."/>
            <person name="Zhang Y."/>
            <person name="Huang X."/>
            <person name="Su Z."/>
            <person name="Tong W."/>
            <person name="Li J."/>
            <person name="Tong Z."/>
            <person name="Li S."/>
            <person name="Ye J."/>
            <person name="Wang L."/>
            <person name="Fang L."/>
            <person name="Lei T."/>
            <person name="Chen C.-S."/>
            <person name="Chen H.-C."/>
            <person name="Xu Z."/>
            <person name="Li H."/>
            <person name="Huang H."/>
            <person name="Zhang F."/>
            <person name="Xu H."/>
            <person name="Li N."/>
            <person name="Zhao C."/>
            <person name="Li S."/>
            <person name="Dong L."/>
            <person name="Huang Y."/>
            <person name="Li L."/>
            <person name="Xi Y."/>
            <person name="Qi Q."/>
            <person name="Li W."/>
            <person name="Zhang B."/>
            <person name="Hu W."/>
            <person name="Zhang Y."/>
            <person name="Tian X."/>
            <person name="Jiao Y."/>
            <person name="Liang X."/>
            <person name="Jin J."/>
            <person name="Gao L."/>
            <person name="Zheng W."/>
            <person name="Hao B."/>
            <person name="Liu S.-M."/>
            <person name="Wang W."/>
            <person name="Yuan L."/>
            <person name="Cao M."/>
            <person name="McDermott J."/>
            <person name="Samudrala R."/>
            <person name="Wang J."/>
            <person name="Wong G.K.-S."/>
            <person name="Yang H."/>
        </authorList>
    </citation>
    <scope>NUCLEOTIDE SEQUENCE [LARGE SCALE GENOMIC DNA]</scope>
    <source>
        <strain>cv. Nipponbare</strain>
    </source>
</reference>
<reference key="6">
    <citation type="journal article" date="2003" name="Science">
        <title>Collection, mapping, and annotation of over 28,000 cDNA clones from japonica rice.</title>
        <authorList>
            <consortium name="The rice full-length cDNA consortium"/>
        </authorList>
    </citation>
    <scope>NUCLEOTIDE SEQUENCE [LARGE SCALE MRNA]</scope>
    <source>
        <strain>cv. Nipponbare</strain>
    </source>
</reference>
<name>PSB1_ORYSJ</name>
<dbReference type="EMBL" id="AB014058">
    <property type="protein sequence ID" value="BAA28276.1"/>
    <property type="molecule type" value="mRNA"/>
</dbReference>
<dbReference type="EMBL" id="AC108753">
    <property type="status" value="NOT_ANNOTATED_CDS"/>
    <property type="molecule type" value="Genomic_DNA"/>
</dbReference>
<dbReference type="EMBL" id="AP008215">
    <property type="protein sequence ID" value="BAF25517.1"/>
    <property type="molecule type" value="Genomic_DNA"/>
</dbReference>
<dbReference type="EMBL" id="AP014965">
    <property type="protein sequence ID" value="BAT08852.1"/>
    <property type="molecule type" value="Genomic_DNA"/>
</dbReference>
<dbReference type="EMBL" id="CM000146">
    <property type="protein sequence ID" value="EAZ45289.1"/>
    <property type="molecule type" value="Genomic_DNA"/>
</dbReference>
<dbReference type="EMBL" id="AK060884">
    <property type="protein sequence ID" value="BAG87594.1"/>
    <property type="molecule type" value="mRNA"/>
</dbReference>
<dbReference type="EMBL" id="AK103136">
    <property type="protein sequence ID" value="BAG95912.1"/>
    <property type="molecule type" value="mRNA"/>
</dbReference>
<dbReference type="RefSeq" id="XP_015611664.1">
    <property type="nucleotide sequence ID" value="XM_015756178.1"/>
</dbReference>
<dbReference type="SMR" id="O64464"/>
<dbReference type="FunCoup" id="O64464">
    <property type="interactions" value="3428"/>
</dbReference>
<dbReference type="STRING" id="39947.O64464"/>
<dbReference type="PaxDb" id="39947-O64464"/>
<dbReference type="EnsemblPlants" id="Os09t0505600-01">
    <property type="protein sequence ID" value="Os09t0505600-01"/>
    <property type="gene ID" value="Os09g0505600"/>
</dbReference>
<dbReference type="Gramene" id="Os09t0505600-01">
    <property type="protein sequence ID" value="Os09t0505600-01"/>
    <property type="gene ID" value="Os09g0505600"/>
</dbReference>
<dbReference type="KEGG" id="dosa:Os09g0505600"/>
<dbReference type="eggNOG" id="KOG0179">
    <property type="taxonomic scope" value="Eukaryota"/>
</dbReference>
<dbReference type="HOGENOM" id="CLU_035750_1_1_1"/>
<dbReference type="InParanoid" id="O64464"/>
<dbReference type="OMA" id="CSGCWCD"/>
<dbReference type="OrthoDB" id="268479at2759"/>
<dbReference type="Proteomes" id="UP000000763">
    <property type="component" value="Chromosome 9"/>
</dbReference>
<dbReference type="Proteomes" id="UP000007752">
    <property type="component" value="Chromosome 9"/>
</dbReference>
<dbReference type="Proteomes" id="UP000059680">
    <property type="component" value="Chromosome 9"/>
</dbReference>
<dbReference type="GO" id="GO:0005829">
    <property type="term" value="C:cytosol"/>
    <property type="evidence" value="ECO:0000318"/>
    <property type="project" value="GO_Central"/>
</dbReference>
<dbReference type="GO" id="GO:0005634">
    <property type="term" value="C:nucleus"/>
    <property type="evidence" value="ECO:0000318"/>
    <property type="project" value="GO_Central"/>
</dbReference>
<dbReference type="GO" id="GO:0019774">
    <property type="term" value="C:proteasome core complex, beta-subunit complex"/>
    <property type="evidence" value="ECO:0000250"/>
    <property type="project" value="UniProtKB"/>
</dbReference>
<dbReference type="GO" id="GO:0043161">
    <property type="term" value="P:proteasome-mediated ubiquitin-dependent protein catabolic process"/>
    <property type="evidence" value="ECO:0000318"/>
    <property type="project" value="GO_Central"/>
</dbReference>
<dbReference type="CDD" id="cd03757">
    <property type="entry name" value="proteasome_beta_type_1"/>
    <property type="match status" value="1"/>
</dbReference>
<dbReference type="FunFam" id="3.60.20.10:FF:000040">
    <property type="entry name" value="Proteasome subunit beta"/>
    <property type="match status" value="1"/>
</dbReference>
<dbReference type="Gene3D" id="3.60.20.10">
    <property type="entry name" value="Glutamine Phosphoribosylpyrophosphate, subunit 1, domain 1"/>
    <property type="match status" value="1"/>
</dbReference>
<dbReference type="InterPro" id="IPR029055">
    <property type="entry name" value="Ntn_hydrolases_N"/>
</dbReference>
<dbReference type="InterPro" id="IPR016050">
    <property type="entry name" value="Proteasome_bsu_CS"/>
</dbReference>
<dbReference type="InterPro" id="IPR001353">
    <property type="entry name" value="Proteasome_sua/b"/>
</dbReference>
<dbReference type="InterPro" id="IPR023333">
    <property type="entry name" value="Proteasome_suB-type"/>
</dbReference>
<dbReference type="PANTHER" id="PTHR32194">
    <property type="entry name" value="METALLOPROTEASE TLDD"/>
    <property type="match status" value="1"/>
</dbReference>
<dbReference type="PANTHER" id="PTHR32194:SF2">
    <property type="entry name" value="PROTEASOME SUBUNIT BETA TYPE-1"/>
    <property type="match status" value="1"/>
</dbReference>
<dbReference type="Pfam" id="PF00227">
    <property type="entry name" value="Proteasome"/>
    <property type="match status" value="1"/>
</dbReference>
<dbReference type="SUPFAM" id="SSF56235">
    <property type="entry name" value="N-terminal nucleophile aminohydrolases (Ntn hydrolases)"/>
    <property type="match status" value="1"/>
</dbReference>
<dbReference type="PROSITE" id="PS00854">
    <property type="entry name" value="PROTEASOME_BETA_1"/>
    <property type="match status" value="1"/>
</dbReference>
<dbReference type="PROSITE" id="PS51476">
    <property type="entry name" value="PROTEASOME_BETA_2"/>
    <property type="match status" value="1"/>
</dbReference>
<protein>
    <recommendedName>
        <fullName>Proteasome subunit beta type-1</fullName>
    </recommendedName>
    <alternativeName>
        <fullName>20S proteasome alpha subunit F</fullName>
    </alternativeName>
    <alternativeName>
        <fullName>20S proteasome subunit beta-6</fullName>
    </alternativeName>
</protein>
<sequence>MSRRGDWVYENNGGTCVAIAGADYCVVAADTRLSVGYNILTRDHSKICELADKCALASSGFQGDIKALHKNLAARELLYQHQHNKRMSCPAMAQLLSNTLYYKRFFPYYAFNVLGGLDSEGKGCVFTYDAVGSYERTGYSAQGTGSALIMPVLDNQLKSPSPLLLPARDAVTPLSETEAVDLVKDVFASATERDIYTGDKLEIVVINKAGTKREYIDLRKD</sequence>
<keyword id="KW-0963">Cytoplasm</keyword>
<keyword id="KW-0539">Nucleus</keyword>
<keyword id="KW-0647">Proteasome</keyword>
<keyword id="KW-1185">Reference proteome</keyword>
<proteinExistence type="evidence at transcript level"/>
<accession>O64464</accession>
<accession>Q0J0L6</accession>
<comment type="function">
    <text>Non-catalytic component of the proteasome, a multicatalytic proteinase complex which is characterized by its ability to cleave peptides with Arg, Phe, Tyr, Leu, and Glu adjacent to the leaving group at neutral or slightly basic pH. The proteasome has an ATP-dependent proteolytic activity.</text>
</comment>
<comment type="subunit">
    <text evidence="1">The 26S proteasome consists of a 20S proteasome core and two 19S regulatory subunits. The 20S proteasome core is composed of 28 subunits that are arranged in four stacked rings, resulting in a barrel-shaped structure. The two end rings are each formed by seven alpha subunits, and the two central rings are each formed by seven beta subunits. The catalytic chamber with the active sites is on the inside of the barrel (By similarity).</text>
</comment>
<comment type="subcellular location">
    <subcellularLocation>
        <location evidence="2">Cytoplasm</location>
    </subcellularLocation>
    <subcellularLocation>
        <location evidence="1">Nucleus</location>
    </subcellularLocation>
</comment>
<comment type="similarity">
    <text evidence="2">Belongs to the peptidase T1B family.</text>
</comment>
<gene>
    <name type="primary">PBF1</name>
    <name type="ordered locus">Os09g0505600</name>
    <name type="ordered locus">LOC_Os09g32800</name>
    <name evidence="3" type="ORF">OsJ_29931</name>
</gene>
<organism>
    <name type="scientific">Oryza sativa subsp. japonica</name>
    <name type="common">Rice</name>
    <dbReference type="NCBI Taxonomy" id="39947"/>
    <lineage>
        <taxon>Eukaryota</taxon>
        <taxon>Viridiplantae</taxon>
        <taxon>Streptophyta</taxon>
        <taxon>Embryophyta</taxon>
        <taxon>Tracheophyta</taxon>
        <taxon>Spermatophyta</taxon>
        <taxon>Magnoliopsida</taxon>
        <taxon>Liliopsida</taxon>
        <taxon>Poales</taxon>
        <taxon>Poaceae</taxon>
        <taxon>BOP clade</taxon>
        <taxon>Oryzoideae</taxon>
        <taxon>Oryzeae</taxon>
        <taxon>Oryzinae</taxon>
        <taxon>Oryza</taxon>
        <taxon>Oryza sativa</taxon>
    </lineage>
</organism>
<feature type="chain" id="PRO_0000148039" description="Proteasome subunit beta type-1">
    <location>
        <begin position="1"/>
        <end position="221"/>
    </location>
</feature>